<evidence type="ECO:0000255" key="1">
    <source>
        <dbReference type="HAMAP-Rule" id="MF_01325"/>
    </source>
</evidence>
<evidence type="ECO:0000256" key="2">
    <source>
        <dbReference type="SAM" id="MobiDB-lite"/>
    </source>
</evidence>
<evidence type="ECO:0000305" key="3"/>
<comment type="function">
    <text evidence="1">One of the primary rRNA binding proteins, it binds directly near the 3'-end of the 23S rRNA, where it nucleates assembly of the 50S subunit.</text>
</comment>
<comment type="subunit">
    <text evidence="1">Part of the 50S ribosomal subunit. Forms a cluster with proteins L14 and L19.</text>
</comment>
<comment type="PTM">
    <text evidence="1">Methylated by PrmB.</text>
</comment>
<comment type="similarity">
    <text evidence="1">Belongs to the universal ribosomal protein uL3 family.</text>
</comment>
<accession>B1JU22</accession>
<protein>
    <recommendedName>
        <fullName evidence="1">Large ribosomal subunit protein uL3</fullName>
    </recommendedName>
    <alternativeName>
        <fullName evidence="3">50S ribosomal protein L3</fullName>
    </alternativeName>
</protein>
<dbReference type="EMBL" id="CP000958">
    <property type="protein sequence ID" value="ACA89507.1"/>
    <property type="molecule type" value="Genomic_DNA"/>
</dbReference>
<dbReference type="RefSeq" id="WP_006482922.1">
    <property type="nucleotide sequence ID" value="NC_010508.1"/>
</dbReference>
<dbReference type="SMR" id="B1JU22"/>
<dbReference type="GeneID" id="93193451"/>
<dbReference type="KEGG" id="bcm:Bcenmc03_0327"/>
<dbReference type="HOGENOM" id="CLU_044142_4_1_4"/>
<dbReference type="Proteomes" id="UP000002169">
    <property type="component" value="Chromosome 1"/>
</dbReference>
<dbReference type="GO" id="GO:0022625">
    <property type="term" value="C:cytosolic large ribosomal subunit"/>
    <property type="evidence" value="ECO:0007669"/>
    <property type="project" value="TreeGrafter"/>
</dbReference>
<dbReference type="GO" id="GO:0019843">
    <property type="term" value="F:rRNA binding"/>
    <property type="evidence" value="ECO:0007669"/>
    <property type="project" value="UniProtKB-UniRule"/>
</dbReference>
<dbReference type="GO" id="GO:0003735">
    <property type="term" value="F:structural constituent of ribosome"/>
    <property type="evidence" value="ECO:0007669"/>
    <property type="project" value="InterPro"/>
</dbReference>
<dbReference type="GO" id="GO:0006412">
    <property type="term" value="P:translation"/>
    <property type="evidence" value="ECO:0007669"/>
    <property type="project" value="UniProtKB-UniRule"/>
</dbReference>
<dbReference type="FunFam" id="2.40.30.10:FF:000004">
    <property type="entry name" value="50S ribosomal protein L3"/>
    <property type="match status" value="1"/>
</dbReference>
<dbReference type="FunFam" id="3.30.160.810:FF:000001">
    <property type="entry name" value="50S ribosomal protein L3"/>
    <property type="match status" value="1"/>
</dbReference>
<dbReference type="Gene3D" id="3.30.160.810">
    <property type="match status" value="1"/>
</dbReference>
<dbReference type="Gene3D" id="2.40.30.10">
    <property type="entry name" value="Translation factors"/>
    <property type="match status" value="1"/>
</dbReference>
<dbReference type="HAMAP" id="MF_01325_B">
    <property type="entry name" value="Ribosomal_uL3_B"/>
    <property type="match status" value="1"/>
</dbReference>
<dbReference type="InterPro" id="IPR000597">
    <property type="entry name" value="Ribosomal_uL3"/>
</dbReference>
<dbReference type="InterPro" id="IPR019927">
    <property type="entry name" value="Ribosomal_uL3_bac/org-type"/>
</dbReference>
<dbReference type="InterPro" id="IPR019926">
    <property type="entry name" value="Ribosomal_uL3_CS"/>
</dbReference>
<dbReference type="InterPro" id="IPR009000">
    <property type="entry name" value="Transl_B-barrel_sf"/>
</dbReference>
<dbReference type="NCBIfam" id="TIGR03625">
    <property type="entry name" value="L3_bact"/>
    <property type="match status" value="1"/>
</dbReference>
<dbReference type="PANTHER" id="PTHR11229">
    <property type="entry name" value="50S RIBOSOMAL PROTEIN L3"/>
    <property type="match status" value="1"/>
</dbReference>
<dbReference type="PANTHER" id="PTHR11229:SF16">
    <property type="entry name" value="LARGE RIBOSOMAL SUBUNIT PROTEIN UL3C"/>
    <property type="match status" value="1"/>
</dbReference>
<dbReference type="Pfam" id="PF00297">
    <property type="entry name" value="Ribosomal_L3"/>
    <property type="match status" value="1"/>
</dbReference>
<dbReference type="SUPFAM" id="SSF50447">
    <property type="entry name" value="Translation proteins"/>
    <property type="match status" value="1"/>
</dbReference>
<dbReference type="PROSITE" id="PS00474">
    <property type="entry name" value="RIBOSOMAL_L3"/>
    <property type="match status" value="1"/>
</dbReference>
<feature type="chain" id="PRO_0000353596" description="Large ribosomal subunit protein uL3">
    <location>
        <begin position="1"/>
        <end position="216"/>
    </location>
</feature>
<feature type="region of interest" description="Disordered" evidence="2">
    <location>
        <begin position="133"/>
        <end position="153"/>
    </location>
</feature>
<feature type="compositionally biased region" description="Polar residues" evidence="2">
    <location>
        <begin position="133"/>
        <end position="145"/>
    </location>
</feature>
<feature type="modified residue" description="N5-methylglutamine" evidence="1">
    <location>
        <position position="153"/>
    </location>
</feature>
<reference key="1">
    <citation type="submission" date="2008-02" db="EMBL/GenBank/DDBJ databases">
        <title>Complete sequence of chromosome 1 of Burkholderia cenocepacia MC0-3.</title>
        <authorList>
            <person name="Copeland A."/>
            <person name="Lucas S."/>
            <person name="Lapidus A."/>
            <person name="Barry K."/>
            <person name="Bruce D."/>
            <person name="Goodwin L."/>
            <person name="Glavina del Rio T."/>
            <person name="Dalin E."/>
            <person name="Tice H."/>
            <person name="Pitluck S."/>
            <person name="Chain P."/>
            <person name="Malfatti S."/>
            <person name="Shin M."/>
            <person name="Vergez L."/>
            <person name="Schmutz J."/>
            <person name="Larimer F."/>
            <person name="Land M."/>
            <person name="Hauser L."/>
            <person name="Kyrpides N."/>
            <person name="Mikhailova N."/>
            <person name="Tiedje J."/>
            <person name="Richardson P."/>
        </authorList>
    </citation>
    <scope>NUCLEOTIDE SEQUENCE [LARGE SCALE GENOMIC DNA]</scope>
    <source>
        <strain>MC0-3</strain>
    </source>
</reference>
<organism>
    <name type="scientific">Burkholderia orbicola (strain MC0-3)</name>
    <dbReference type="NCBI Taxonomy" id="406425"/>
    <lineage>
        <taxon>Bacteria</taxon>
        <taxon>Pseudomonadati</taxon>
        <taxon>Pseudomonadota</taxon>
        <taxon>Betaproteobacteria</taxon>
        <taxon>Burkholderiales</taxon>
        <taxon>Burkholderiaceae</taxon>
        <taxon>Burkholderia</taxon>
        <taxon>Burkholderia cepacia complex</taxon>
        <taxon>Burkholderia orbicola</taxon>
    </lineage>
</organism>
<proteinExistence type="inferred from homology"/>
<keyword id="KW-0488">Methylation</keyword>
<keyword id="KW-0687">Ribonucleoprotein</keyword>
<keyword id="KW-0689">Ribosomal protein</keyword>
<keyword id="KW-0694">RNA-binding</keyword>
<keyword id="KW-0699">rRNA-binding</keyword>
<gene>
    <name evidence="1" type="primary">rplC</name>
    <name type="ordered locus">Bcenmc03_0327</name>
</gene>
<name>RL3_BURO0</name>
<sequence length="216" mass="22585">MSLGLVGRKVGMTRIFTAEGDSIPVTVLDVSDNRVTQIKTVETDGYTAVQVAFGSRRASRVTKPLAGHLAKAGVEAGEILKEFRIDAAKAAELSNGAVVGADLFEVGQKVDVQGVSIGKGYAGTIKRYNFSSGRATHGNSRSHNVPGSIGMAQDPGRVFPGKRMTGHMGDVTVTVQNLEIARIDAERKLLLVKGAIPGAKGGKVFVTPAVKTKGAK</sequence>